<sequence length="261" mass="29920">MSVVTMKELLEAGAHFGHQVKRWNPKMKKYIFAERNGIHIIDLQKTVKGIEEAYEFLKTVSAEGGSILFVGTKKQAQDAIQEEAKRAGVFYVNHRWLGGMLTNFATVRKSVEKWQRIEQMKEDGTLYLHTKKEIAKYEKERQKLELNLIGIKDMMEIPKAIFIVDIKKEKIAVEEAIKLGIPIAAIVDTNCDPDLVDYVIPGNDDAIRAIKLITSKMADAILEGKEIFMKKLEEEAEKAAIKEKILQEEEYQKSMDEYIEE</sequence>
<protein>
    <recommendedName>
        <fullName evidence="1">Small ribosomal subunit protein uS2</fullName>
    </recommendedName>
    <alternativeName>
        <fullName evidence="2">30S ribosomal protein S2</fullName>
    </alternativeName>
</protein>
<organism>
    <name type="scientific">Thermodesulfovibrio yellowstonii (strain ATCC 51303 / DSM 11347 / YP87)</name>
    <dbReference type="NCBI Taxonomy" id="289376"/>
    <lineage>
        <taxon>Bacteria</taxon>
        <taxon>Pseudomonadati</taxon>
        <taxon>Nitrospirota</taxon>
        <taxon>Thermodesulfovibrionia</taxon>
        <taxon>Thermodesulfovibrionales</taxon>
        <taxon>Thermodesulfovibrionaceae</taxon>
        <taxon>Thermodesulfovibrio</taxon>
    </lineage>
</organism>
<proteinExistence type="inferred from homology"/>
<keyword id="KW-1185">Reference proteome</keyword>
<keyword id="KW-0687">Ribonucleoprotein</keyword>
<keyword id="KW-0689">Ribosomal protein</keyword>
<dbReference type="EMBL" id="CP001147">
    <property type="protein sequence ID" value="ACI21588.1"/>
    <property type="molecule type" value="Genomic_DNA"/>
</dbReference>
<dbReference type="RefSeq" id="WP_012546300.1">
    <property type="nucleotide sequence ID" value="NC_011296.1"/>
</dbReference>
<dbReference type="RefSeq" id="YP_002249337.1">
    <property type="nucleotide sequence ID" value="NC_011296.1"/>
</dbReference>
<dbReference type="SMR" id="B5YGD9"/>
<dbReference type="FunCoup" id="B5YGD9">
    <property type="interactions" value="561"/>
</dbReference>
<dbReference type="STRING" id="289376.THEYE_A1541"/>
<dbReference type="EnsemblBacteria" id="ACI21588">
    <property type="protein sequence ID" value="ACI21588"/>
    <property type="gene ID" value="THEYE_A1541"/>
</dbReference>
<dbReference type="KEGG" id="tye:THEYE_A1541"/>
<dbReference type="PATRIC" id="fig|289376.4.peg.1499"/>
<dbReference type="eggNOG" id="COG0052">
    <property type="taxonomic scope" value="Bacteria"/>
</dbReference>
<dbReference type="HOGENOM" id="CLU_040318_1_2_0"/>
<dbReference type="InParanoid" id="B5YGD9"/>
<dbReference type="OrthoDB" id="9808036at2"/>
<dbReference type="Proteomes" id="UP000000718">
    <property type="component" value="Chromosome"/>
</dbReference>
<dbReference type="GO" id="GO:0022627">
    <property type="term" value="C:cytosolic small ribosomal subunit"/>
    <property type="evidence" value="ECO:0000318"/>
    <property type="project" value="GO_Central"/>
</dbReference>
<dbReference type="GO" id="GO:0003735">
    <property type="term" value="F:structural constituent of ribosome"/>
    <property type="evidence" value="ECO:0000318"/>
    <property type="project" value="GO_Central"/>
</dbReference>
<dbReference type="GO" id="GO:0006412">
    <property type="term" value="P:translation"/>
    <property type="evidence" value="ECO:0007669"/>
    <property type="project" value="UniProtKB-UniRule"/>
</dbReference>
<dbReference type="CDD" id="cd01425">
    <property type="entry name" value="RPS2"/>
    <property type="match status" value="1"/>
</dbReference>
<dbReference type="Gene3D" id="3.40.50.10490">
    <property type="entry name" value="Glucose-6-phosphate isomerase like protein, domain 1"/>
    <property type="match status" value="1"/>
</dbReference>
<dbReference type="Gene3D" id="1.10.287.610">
    <property type="entry name" value="Helix hairpin bin"/>
    <property type="match status" value="1"/>
</dbReference>
<dbReference type="HAMAP" id="MF_00291_B">
    <property type="entry name" value="Ribosomal_uS2_B"/>
    <property type="match status" value="1"/>
</dbReference>
<dbReference type="InterPro" id="IPR001865">
    <property type="entry name" value="Ribosomal_uS2"/>
</dbReference>
<dbReference type="InterPro" id="IPR005706">
    <property type="entry name" value="Ribosomal_uS2_bac/mit/plastid"/>
</dbReference>
<dbReference type="InterPro" id="IPR018130">
    <property type="entry name" value="Ribosomal_uS2_CS"/>
</dbReference>
<dbReference type="InterPro" id="IPR023591">
    <property type="entry name" value="Ribosomal_uS2_flav_dom_sf"/>
</dbReference>
<dbReference type="NCBIfam" id="TIGR01011">
    <property type="entry name" value="rpsB_bact"/>
    <property type="match status" value="1"/>
</dbReference>
<dbReference type="PANTHER" id="PTHR12534">
    <property type="entry name" value="30S RIBOSOMAL PROTEIN S2 PROKARYOTIC AND ORGANELLAR"/>
    <property type="match status" value="1"/>
</dbReference>
<dbReference type="PANTHER" id="PTHR12534:SF0">
    <property type="entry name" value="SMALL RIBOSOMAL SUBUNIT PROTEIN US2M"/>
    <property type="match status" value="1"/>
</dbReference>
<dbReference type="Pfam" id="PF00318">
    <property type="entry name" value="Ribosomal_S2"/>
    <property type="match status" value="1"/>
</dbReference>
<dbReference type="PRINTS" id="PR00395">
    <property type="entry name" value="RIBOSOMALS2"/>
</dbReference>
<dbReference type="SUPFAM" id="SSF52313">
    <property type="entry name" value="Ribosomal protein S2"/>
    <property type="match status" value="1"/>
</dbReference>
<dbReference type="PROSITE" id="PS00962">
    <property type="entry name" value="RIBOSOMAL_S2_1"/>
    <property type="match status" value="1"/>
</dbReference>
<dbReference type="PROSITE" id="PS00963">
    <property type="entry name" value="RIBOSOMAL_S2_2"/>
    <property type="match status" value="1"/>
</dbReference>
<reference key="1">
    <citation type="submission" date="2008-08" db="EMBL/GenBank/DDBJ databases">
        <title>The complete genome sequence of Thermodesulfovibrio yellowstonii strain ATCC 51303 / DSM 11347 / YP87.</title>
        <authorList>
            <person name="Dodson R.J."/>
            <person name="Durkin A.S."/>
            <person name="Wu M."/>
            <person name="Eisen J."/>
            <person name="Sutton G."/>
        </authorList>
    </citation>
    <scope>NUCLEOTIDE SEQUENCE [LARGE SCALE GENOMIC DNA]</scope>
    <source>
        <strain>ATCC 51303 / DSM 11347 / YP87</strain>
    </source>
</reference>
<accession>B5YGD9</accession>
<comment type="similarity">
    <text evidence="1">Belongs to the universal ribosomal protein uS2 family.</text>
</comment>
<feature type="chain" id="PRO_1000115069" description="Small ribosomal subunit protein uS2">
    <location>
        <begin position="1"/>
        <end position="261"/>
    </location>
</feature>
<name>RS2_THEYD</name>
<evidence type="ECO:0000255" key="1">
    <source>
        <dbReference type="HAMAP-Rule" id="MF_00291"/>
    </source>
</evidence>
<evidence type="ECO:0000305" key="2"/>
<gene>
    <name evidence="1" type="primary">rpsB</name>
    <name type="ordered locus">THEYE_A1541</name>
</gene>